<dbReference type="EC" id="2.1.1.61" evidence="1"/>
<dbReference type="EC" id="1.5.-.-" evidence="1"/>
<dbReference type="EMBL" id="CP000783">
    <property type="protein sequence ID" value="ABU76162.1"/>
    <property type="status" value="ALT_INIT"/>
    <property type="molecule type" value="Genomic_DNA"/>
</dbReference>
<dbReference type="RefSeq" id="WP_041460426.1">
    <property type="nucleotide sequence ID" value="NC_009778.1"/>
</dbReference>
<dbReference type="SMR" id="A7MH59"/>
<dbReference type="KEGG" id="esa:ESA_00892"/>
<dbReference type="PATRIC" id="fig|290339.8.peg.791"/>
<dbReference type="HOGENOM" id="CLU_022427_1_0_6"/>
<dbReference type="Proteomes" id="UP000000260">
    <property type="component" value="Chromosome"/>
</dbReference>
<dbReference type="GO" id="GO:0005737">
    <property type="term" value="C:cytoplasm"/>
    <property type="evidence" value="ECO:0007669"/>
    <property type="project" value="UniProtKB-SubCell"/>
</dbReference>
<dbReference type="GO" id="GO:0050660">
    <property type="term" value="F:flavin adenine dinucleotide binding"/>
    <property type="evidence" value="ECO:0007669"/>
    <property type="project" value="UniProtKB-UniRule"/>
</dbReference>
<dbReference type="GO" id="GO:0016645">
    <property type="term" value="F:oxidoreductase activity, acting on the CH-NH group of donors"/>
    <property type="evidence" value="ECO:0007669"/>
    <property type="project" value="InterPro"/>
</dbReference>
<dbReference type="GO" id="GO:0004808">
    <property type="term" value="F:tRNA (5-methylaminomethyl-2-thiouridylate)(34)-methyltransferase activity"/>
    <property type="evidence" value="ECO:0007669"/>
    <property type="project" value="UniProtKB-EC"/>
</dbReference>
<dbReference type="GO" id="GO:0032259">
    <property type="term" value="P:methylation"/>
    <property type="evidence" value="ECO:0007669"/>
    <property type="project" value="UniProtKB-KW"/>
</dbReference>
<dbReference type="GO" id="GO:0002098">
    <property type="term" value="P:tRNA wobble uridine modification"/>
    <property type="evidence" value="ECO:0007669"/>
    <property type="project" value="TreeGrafter"/>
</dbReference>
<dbReference type="FunFam" id="3.40.50.150:FF:000107">
    <property type="entry name" value="tRNA 5-methylaminomethyl-2-thiouridine biosynthesis bifunctional protein MnmC"/>
    <property type="match status" value="1"/>
</dbReference>
<dbReference type="Gene3D" id="3.30.9.10">
    <property type="entry name" value="D-Amino Acid Oxidase, subunit A, domain 2"/>
    <property type="match status" value="1"/>
</dbReference>
<dbReference type="Gene3D" id="3.50.50.60">
    <property type="entry name" value="FAD/NAD(P)-binding domain"/>
    <property type="match status" value="1"/>
</dbReference>
<dbReference type="Gene3D" id="3.40.50.150">
    <property type="entry name" value="Vaccinia Virus protein VP39"/>
    <property type="match status" value="1"/>
</dbReference>
<dbReference type="HAMAP" id="MF_01102">
    <property type="entry name" value="MnmC"/>
    <property type="match status" value="1"/>
</dbReference>
<dbReference type="InterPro" id="IPR006076">
    <property type="entry name" value="FAD-dep_OxRdtase"/>
</dbReference>
<dbReference type="InterPro" id="IPR036188">
    <property type="entry name" value="FAD/NAD-bd_sf"/>
</dbReference>
<dbReference type="InterPro" id="IPR008471">
    <property type="entry name" value="MnmC-like_methylTransf"/>
</dbReference>
<dbReference type="InterPro" id="IPR029063">
    <property type="entry name" value="SAM-dependent_MTases_sf"/>
</dbReference>
<dbReference type="InterPro" id="IPR023032">
    <property type="entry name" value="tRNA_MAMT_biosynth_bifunc_MnmC"/>
</dbReference>
<dbReference type="InterPro" id="IPR047785">
    <property type="entry name" value="tRNA_MNMC2"/>
</dbReference>
<dbReference type="InterPro" id="IPR017610">
    <property type="entry name" value="tRNA_S-uridine_synth_MnmC_C"/>
</dbReference>
<dbReference type="NCBIfam" id="TIGR03197">
    <property type="entry name" value="MnmC_Cterm"/>
    <property type="match status" value="1"/>
</dbReference>
<dbReference type="NCBIfam" id="NF002480">
    <property type="entry name" value="PRK01747.1-1"/>
    <property type="match status" value="1"/>
</dbReference>
<dbReference type="NCBIfam" id="NF002481">
    <property type="entry name" value="PRK01747.1-2"/>
    <property type="match status" value="1"/>
</dbReference>
<dbReference type="NCBIfam" id="NF002482">
    <property type="entry name" value="PRK01747.1-3"/>
    <property type="match status" value="1"/>
</dbReference>
<dbReference type="NCBIfam" id="NF002484">
    <property type="entry name" value="PRK01747.1-5"/>
    <property type="match status" value="1"/>
</dbReference>
<dbReference type="NCBIfam" id="NF033855">
    <property type="entry name" value="tRNA_MNMC2"/>
    <property type="match status" value="1"/>
</dbReference>
<dbReference type="PANTHER" id="PTHR13847">
    <property type="entry name" value="SARCOSINE DEHYDROGENASE-RELATED"/>
    <property type="match status" value="1"/>
</dbReference>
<dbReference type="PANTHER" id="PTHR13847:SF283">
    <property type="entry name" value="TRNA 5-METHYLAMINOMETHYL-2-THIOURIDINE BIOSYNTHESIS BIFUNCTIONAL PROTEIN MNMC"/>
    <property type="match status" value="1"/>
</dbReference>
<dbReference type="Pfam" id="PF01266">
    <property type="entry name" value="DAO"/>
    <property type="match status" value="1"/>
</dbReference>
<dbReference type="Pfam" id="PF05430">
    <property type="entry name" value="Methyltransf_30"/>
    <property type="match status" value="1"/>
</dbReference>
<dbReference type="SUPFAM" id="SSF51905">
    <property type="entry name" value="FAD/NAD(P)-binding domain"/>
    <property type="match status" value="1"/>
</dbReference>
<dbReference type="SUPFAM" id="SSF53335">
    <property type="entry name" value="S-adenosyl-L-methionine-dependent methyltransferases"/>
    <property type="match status" value="1"/>
</dbReference>
<evidence type="ECO:0000255" key="1">
    <source>
        <dbReference type="HAMAP-Rule" id="MF_01102"/>
    </source>
</evidence>
<evidence type="ECO:0000305" key="2"/>
<protein>
    <recommendedName>
        <fullName evidence="1">tRNA 5-methylaminomethyl-2-thiouridine biosynthesis bifunctional protein MnmC</fullName>
        <shortName evidence="1">tRNA mnm(5)s(2)U biosynthesis bifunctional protein</shortName>
    </recommendedName>
    <domain>
        <recommendedName>
            <fullName evidence="1">tRNA (mnm(5)s(2)U34)-methyltransferase</fullName>
            <ecNumber evidence="1">2.1.1.61</ecNumber>
        </recommendedName>
    </domain>
    <domain>
        <recommendedName>
            <fullName evidence="1">FAD-dependent cmnm(5)s(2)U34 oxidoreductase</fullName>
            <ecNumber evidence="1">1.5.-.-</ecNumber>
        </recommendedName>
    </domain>
</protein>
<reference key="1">
    <citation type="journal article" date="2010" name="PLoS ONE">
        <title>Genome sequence of Cronobacter sakazakii BAA-894 and comparative genomic hybridization analysis with other Cronobacter species.</title>
        <authorList>
            <person name="Kucerova E."/>
            <person name="Clifton S.W."/>
            <person name="Xia X.Q."/>
            <person name="Long F."/>
            <person name="Porwollik S."/>
            <person name="Fulton L."/>
            <person name="Fronick C."/>
            <person name="Minx P."/>
            <person name="Kyung K."/>
            <person name="Warren W."/>
            <person name="Fulton R."/>
            <person name="Feng D."/>
            <person name="Wollam A."/>
            <person name="Shah N."/>
            <person name="Bhonagiri V."/>
            <person name="Nash W.E."/>
            <person name="Hallsworth-Pepin K."/>
            <person name="Wilson R.K."/>
            <person name="McClelland M."/>
            <person name="Forsythe S.J."/>
        </authorList>
    </citation>
    <scope>NUCLEOTIDE SEQUENCE [LARGE SCALE GENOMIC DNA]</scope>
    <source>
        <strain>ATCC BAA-894</strain>
    </source>
</reference>
<proteinExistence type="inferred from homology"/>
<organism>
    <name type="scientific">Cronobacter sakazakii (strain ATCC BAA-894)</name>
    <name type="common">Enterobacter sakazakii</name>
    <dbReference type="NCBI Taxonomy" id="290339"/>
    <lineage>
        <taxon>Bacteria</taxon>
        <taxon>Pseudomonadati</taxon>
        <taxon>Pseudomonadota</taxon>
        <taxon>Gammaproteobacteria</taxon>
        <taxon>Enterobacterales</taxon>
        <taxon>Enterobacteriaceae</taxon>
        <taxon>Cronobacter</taxon>
    </lineage>
</organism>
<sequence length="670" mass="72979">MKPIAIQPASLTFNNEGTPVSRDFDDVYFSNDDGLEETRYVFLDGNQLPERFMTHPRDSFIVAESGFGTGLNFLTLWQAFAAFRDAHPDATLQRLHFISFEKFPLTPADLKSAHAHWPELAPWAQQLQAQWPMALPGCQRLVLDGGRVTLDLWLGDINELVDTLDDTHNRQVDAWFLDGFAPSKNPEMWTPGLFTAMARLARPGGTLATFTSAGFVRRGLIEAGFDVVKRKGFGRKREMLTGALSHDAPPPARAPWYARRPASGDKDVAVVGGGIASALLALGLLRRGWQVTLYCEDDAPAQGASGNRQGALYPLLSHHDAALAAFFPAAFTFARRLYDALPVSFDKDWCGVTQLGWDEKSQTKINQMLDLALPDTLAHGVDAREVRERCGVKTGCGGIEYPQGGWLCPAQLTAGVLELAQAHGLRVHYGHRVSALHREDLDWQLDFANGAQARHAAVVLANGHQLSGFPQTEKLPVYPVGGQVSHIPTTPGLGALRQVLCYDGYLTPQNPANAMHCIGASYHRGVSEMRYQEEDQQRNRQRLIDCLPAASWAQEVDVSAGDARCGVRCATRDHLPMVGNAPDYAATLRDYATLSQDASAPETVMPAPVLKNLFVLGALGSRGLCSAPLAAEILASQMSGEPLPLDGATLAALNPNRLWVRKLLKGRAAS</sequence>
<name>MNMC_CROS8</name>
<feature type="chain" id="PRO_0000347981" description="tRNA 5-methylaminomethyl-2-thiouridine biosynthesis bifunctional protein MnmC">
    <location>
        <begin position="1"/>
        <end position="670"/>
    </location>
</feature>
<feature type="region of interest" description="tRNA (mnm(5)s(2)U34)-methyltransferase">
    <location>
        <begin position="1"/>
        <end position="245"/>
    </location>
</feature>
<feature type="region of interest" description="FAD-dependent cmnm(5)s(2)U34 oxidoreductase">
    <location>
        <begin position="271"/>
        <end position="670"/>
    </location>
</feature>
<keyword id="KW-0963">Cytoplasm</keyword>
<keyword id="KW-0274">FAD</keyword>
<keyword id="KW-0285">Flavoprotein</keyword>
<keyword id="KW-0489">Methyltransferase</keyword>
<keyword id="KW-0511">Multifunctional enzyme</keyword>
<keyword id="KW-0560">Oxidoreductase</keyword>
<keyword id="KW-1185">Reference proteome</keyword>
<keyword id="KW-0949">S-adenosyl-L-methionine</keyword>
<keyword id="KW-0808">Transferase</keyword>
<keyword id="KW-0819">tRNA processing</keyword>
<gene>
    <name evidence="1" type="primary">mnmC</name>
    <name type="ordered locus">ESA_00892</name>
</gene>
<accession>A7MH59</accession>
<comment type="function">
    <text evidence="1">Catalyzes the last two steps in the biosynthesis of 5-methylaminomethyl-2-thiouridine (mnm(5)s(2)U) at the wobble position (U34) in tRNA. Catalyzes the FAD-dependent demodification of cmnm(5)s(2)U34 to nm(5)s(2)U34, followed by the transfer of a methyl group from S-adenosyl-L-methionine to nm(5)s(2)U34, to form mnm(5)s(2)U34.</text>
</comment>
<comment type="catalytic activity">
    <reaction evidence="1">
        <text>5-aminomethyl-2-thiouridine(34) in tRNA + S-adenosyl-L-methionine = 5-methylaminomethyl-2-thiouridine(34) in tRNA + S-adenosyl-L-homocysteine + H(+)</text>
        <dbReference type="Rhea" id="RHEA:19569"/>
        <dbReference type="Rhea" id="RHEA-COMP:10195"/>
        <dbReference type="Rhea" id="RHEA-COMP:10197"/>
        <dbReference type="ChEBI" id="CHEBI:15378"/>
        <dbReference type="ChEBI" id="CHEBI:57856"/>
        <dbReference type="ChEBI" id="CHEBI:59789"/>
        <dbReference type="ChEBI" id="CHEBI:74454"/>
        <dbReference type="ChEBI" id="CHEBI:74455"/>
        <dbReference type="EC" id="2.1.1.61"/>
    </reaction>
</comment>
<comment type="cofactor">
    <cofactor evidence="1">
        <name>FAD</name>
        <dbReference type="ChEBI" id="CHEBI:57692"/>
    </cofactor>
</comment>
<comment type="subcellular location">
    <subcellularLocation>
        <location evidence="1">Cytoplasm</location>
    </subcellularLocation>
</comment>
<comment type="similarity">
    <text evidence="1">In the N-terminal section; belongs to the methyltransferase superfamily. tRNA (mnm(5)s(2)U34)-methyltransferase family.</text>
</comment>
<comment type="similarity">
    <text evidence="1">In the C-terminal section; belongs to the DAO family.</text>
</comment>
<comment type="sequence caution" evidence="2">
    <conflict type="erroneous initiation">
        <sequence resource="EMBL-CDS" id="ABU76162"/>
    </conflict>
</comment>